<dbReference type="EMBL" id="CU928180">
    <property type="protein sequence ID" value="CAR30359.1"/>
    <property type="molecule type" value="Genomic_DNA"/>
</dbReference>
<dbReference type="RefSeq" id="XP_002556221.1">
    <property type="nucleotide sequence ID" value="XM_002556175.1"/>
</dbReference>
<dbReference type="FunCoup" id="C5E2U8">
    <property type="interactions" value="42"/>
</dbReference>
<dbReference type="GeneID" id="8294539"/>
<dbReference type="KEGG" id="lth:KLTH0H07854g"/>
<dbReference type="eggNOG" id="ENOG502RYGE">
    <property type="taxonomic scope" value="Eukaryota"/>
</dbReference>
<dbReference type="HOGENOM" id="CLU_062256_0_0_1"/>
<dbReference type="InParanoid" id="C5E2U8"/>
<dbReference type="OMA" id="RIWFIRS"/>
<dbReference type="OrthoDB" id="4065996at2759"/>
<dbReference type="Proteomes" id="UP000002036">
    <property type="component" value="Chromosome H"/>
</dbReference>
<dbReference type="GO" id="GO:0005739">
    <property type="term" value="C:mitochondrion"/>
    <property type="evidence" value="ECO:0007669"/>
    <property type="project" value="UniProtKB-SubCell"/>
</dbReference>
<name>RRG1_LACTC</name>
<comment type="function">
    <text evidence="1">Essential for respiratory growth and required for mitochondrial protein synthesis. Required for vacuolar acidification (By similarity).</text>
</comment>
<comment type="subcellular location">
    <subcellularLocation>
        <location evidence="1">Mitochondrion</location>
    </subcellularLocation>
</comment>
<comment type="similarity">
    <text evidence="3">Belongs to the RRG1 family.</text>
</comment>
<feature type="chain" id="PRO_0000402247" description="Required for respiratory growth protein 1, mitochondrial">
    <location>
        <begin position="1"/>
        <end position="360"/>
    </location>
</feature>
<feature type="region of interest" description="Disordered" evidence="2">
    <location>
        <begin position="93"/>
        <end position="112"/>
    </location>
</feature>
<organism>
    <name type="scientific">Lachancea thermotolerans (strain ATCC 56472 / CBS 6340 / NRRL Y-8284)</name>
    <name type="common">Yeast</name>
    <name type="synonym">Kluyveromyces thermotolerans</name>
    <dbReference type="NCBI Taxonomy" id="559295"/>
    <lineage>
        <taxon>Eukaryota</taxon>
        <taxon>Fungi</taxon>
        <taxon>Dikarya</taxon>
        <taxon>Ascomycota</taxon>
        <taxon>Saccharomycotina</taxon>
        <taxon>Saccharomycetes</taxon>
        <taxon>Saccharomycetales</taxon>
        <taxon>Saccharomycetaceae</taxon>
        <taxon>Lachancea</taxon>
    </lineage>
</organism>
<evidence type="ECO:0000250" key="1"/>
<evidence type="ECO:0000256" key="2">
    <source>
        <dbReference type="SAM" id="MobiDB-lite"/>
    </source>
</evidence>
<evidence type="ECO:0000305" key="3"/>
<proteinExistence type="inferred from homology"/>
<accession>C5E2U8</accession>
<gene>
    <name type="primary">RRG1</name>
    <name type="ordered locus">KLTH0H07854g</name>
</gene>
<keyword id="KW-0496">Mitochondrion</keyword>
<keyword id="KW-1185">Reference proteome</keyword>
<sequence length="360" mass="42137">MVLHFSNLARHKTFVLHWYRYTLRNVARQTFSWHLKARVKDITRTTIVKHKSDKSSWSIYILLRDLKALNGFLRNKKTAAAWRLLTLYSKKPLRSGASSPSVALEHSPPLQDPETVRNSHIIHSYIVERQQKNLLPLEIPAEYKTLLLLPLALHDHALKRLHLIESKLVRGPPKVSVNYTSAGKARIWFLRTAVNKNQRQSKALGQIIRREKRKNQKNIDYWEKCRVNGIWAWHEAAWEHLMETNTMLTESPAKYFDNERSRKRAASDGTSVKAVAEWLDPVFSSLDMLQAQSAEQAAYFEQYKHNTVLQGLQQFFARKSDKMYQNRKKRFESLLENDLPFVTPYFSQQNLATVMKSHKF</sequence>
<reference key="1">
    <citation type="journal article" date="2009" name="Genome Res.">
        <title>Comparative genomics of protoploid Saccharomycetaceae.</title>
        <authorList>
            <consortium name="The Genolevures Consortium"/>
            <person name="Souciet J.-L."/>
            <person name="Dujon B."/>
            <person name="Gaillardin C."/>
            <person name="Johnston M."/>
            <person name="Baret P.V."/>
            <person name="Cliften P."/>
            <person name="Sherman D.J."/>
            <person name="Weissenbach J."/>
            <person name="Westhof E."/>
            <person name="Wincker P."/>
            <person name="Jubin C."/>
            <person name="Poulain J."/>
            <person name="Barbe V."/>
            <person name="Segurens B."/>
            <person name="Artiguenave F."/>
            <person name="Anthouard V."/>
            <person name="Vacherie B."/>
            <person name="Val M.-E."/>
            <person name="Fulton R.S."/>
            <person name="Minx P."/>
            <person name="Wilson R."/>
            <person name="Durrens P."/>
            <person name="Jean G."/>
            <person name="Marck C."/>
            <person name="Martin T."/>
            <person name="Nikolski M."/>
            <person name="Rolland T."/>
            <person name="Seret M.-L."/>
            <person name="Casaregola S."/>
            <person name="Despons L."/>
            <person name="Fairhead C."/>
            <person name="Fischer G."/>
            <person name="Lafontaine I."/>
            <person name="Leh V."/>
            <person name="Lemaire M."/>
            <person name="de Montigny J."/>
            <person name="Neuveglise C."/>
            <person name="Thierry A."/>
            <person name="Blanc-Lenfle I."/>
            <person name="Bleykasten C."/>
            <person name="Diffels J."/>
            <person name="Fritsch E."/>
            <person name="Frangeul L."/>
            <person name="Goeffon A."/>
            <person name="Jauniaux N."/>
            <person name="Kachouri-Lafond R."/>
            <person name="Payen C."/>
            <person name="Potier S."/>
            <person name="Pribylova L."/>
            <person name="Ozanne C."/>
            <person name="Richard G.-F."/>
            <person name="Sacerdot C."/>
            <person name="Straub M.-L."/>
            <person name="Talla E."/>
        </authorList>
    </citation>
    <scope>NUCLEOTIDE SEQUENCE [LARGE SCALE GENOMIC DNA]</scope>
    <source>
        <strain>ATCC 56472 / CBS 6340 / NRRL Y-8284</strain>
    </source>
</reference>
<protein>
    <recommendedName>
        <fullName>Required for respiratory growth protein 1, mitochondrial</fullName>
    </recommendedName>
</protein>